<gene>
    <name evidence="1" type="primary">purC</name>
    <name type="ordered locus">YPTB2781</name>
</gene>
<comment type="catalytic activity">
    <reaction evidence="1">
        <text>5-amino-1-(5-phospho-D-ribosyl)imidazole-4-carboxylate + L-aspartate + ATP = (2S)-2-[5-amino-1-(5-phospho-beta-D-ribosyl)imidazole-4-carboxamido]succinate + ADP + phosphate + 2 H(+)</text>
        <dbReference type="Rhea" id="RHEA:22628"/>
        <dbReference type="ChEBI" id="CHEBI:15378"/>
        <dbReference type="ChEBI" id="CHEBI:29991"/>
        <dbReference type="ChEBI" id="CHEBI:30616"/>
        <dbReference type="ChEBI" id="CHEBI:43474"/>
        <dbReference type="ChEBI" id="CHEBI:58443"/>
        <dbReference type="ChEBI" id="CHEBI:77657"/>
        <dbReference type="ChEBI" id="CHEBI:456216"/>
        <dbReference type="EC" id="6.3.2.6"/>
    </reaction>
</comment>
<comment type="pathway">
    <text evidence="1">Purine metabolism; IMP biosynthesis via de novo pathway; 5-amino-1-(5-phospho-D-ribosyl)imidazole-4-carboxamide from 5-amino-1-(5-phospho-D-ribosyl)imidazole-4-carboxylate: step 1/2.</text>
</comment>
<comment type="similarity">
    <text evidence="1">Belongs to the SAICAR synthetase family.</text>
</comment>
<organism>
    <name type="scientific">Yersinia pseudotuberculosis serotype I (strain IP32953)</name>
    <dbReference type="NCBI Taxonomy" id="273123"/>
    <lineage>
        <taxon>Bacteria</taxon>
        <taxon>Pseudomonadati</taxon>
        <taxon>Pseudomonadota</taxon>
        <taxon>Gammaproteobacteria</taxon>
        <taxon>Enterobacterales</taxon>
        <taxon>Yersiniaceae</taxon>
        <taxon>Yersinia</taxon>
    </lineage>
</organism>
<proteinExistence type="inferred from homology"/>
<keyword id="KW-0067">ATP-binding</keyword>
<keyword id="KW-0436">Ligase</keyword>
<keyword id="KW-0547">Nucleotide-binding</keyword>
<keyword id="KW-0658">Purine biosynthesis</keyword>
<evidence type="ECO:0000255" key="1">
    <source>
        <dbReference type="HAMAP-Rule" id="MF_00137"/>
    </source>
</evidence>
<dbReference type="EC" id="6.3.2.6" evidence="1"/>
<dbReference type="EMBL" id="BX936398">
    <property type="protein sequence ID" value="CAH22019.1"/>
    <property type="molecule type" value="Genomic_DNA"/>
</dbReference>
<dbReference type="RefSeq" id="WP_002208555.1">
    <property type="nucleotide sequence ID" value="NZ_CP009712.1"/>
</dbReference>
<dbReference type="SMR" id="Q668F9"/>
<dbReference type="GeneID" id="57975643"/>
<dbReference type="KEGG" id="ypo:BZ17_3849"/>
<dbReference type="KEGG" id="yps:YPTB2781"/>
<dbReference type="PATRIC" id="fig|273123.14.peg.4040"/>
<dbReference type="UniPathway" id="UPA00074">
    <property type="reaction ID" value="UER00131"/>
</dbReference>
<dbReference type="Proteomes" id="UP000001011">
    <property type="component" value="Chromosome"/>
</dbReference>
<dbReference type="GO" id="GO:0005829">
    <property type="term" value="C:cytosol"/>
    <property type="evidence" value="ECO:0007669"/>
    <property type="project" value="TreeGrafter"/>
</dbReference>
<dbReference type="GO" id="GO:0005524">
    <property type="term" value="F:ATP binding"/>
    <property type="evidence" value="ECO:0007669"/>
    <property type="project" value="UniProtKB-KW"/>
</dbReference>
<dbReference type="GO" id="GO:0004639">
    <property type="term" value="F:phosphoribosylaminoimidazolesuccinocarboxamide synthase activity"/>
    <property type="evidence" value="ECO:0007669"/>
    <property type="project" value="UniProtKB-UniRule"/>
</dbReference>
<dbReference type="GO" id="GO:0006189">
    <property type="term" value="P:'de novo' IMP biosynthetic process"/>
    <property type="evidence" value="ECO:0007669"/>
    <property type="project" value="UniProtKB-UniRule"/>
</dbReference>
<dbReference type="GO" id="GO:0009236">
    <property type="term" value="P:cobalamin biosynthetic process"/>
    <property type="evidence" value="ECO:0007669"/>
    <property type="project" value="InterPro"/>
</dbReference>
<dbReference type="CDD" id="cd01415">
    <property type="entry name" value="SAICAR_synt_PurC"/>
    <property type="match status" value="1"/>
</dbReference>
<dbReference type="FunFam" id="3.30.200.20:FF:000086">
    <property type="entry name" value="Phosphoribosylaminoimidazole-succinocarboxamide synthase"/>
    <property type="match status" value="1"/>
</dbReference>
<dbReference type="FunFam" id="3.30.470.20:FF:000006">
    <property type="entry name" value="Phosphoribosylaminoimidazole-succinocarboxamide synthase"/>
    <property type="match status" value="1"/>
</dbReference>
<dbReference type="Gene3D" id="3.30.470.20">
    <property type="entry name" value="ATP-grasp fold, B domain"/>
    <property type="match status" value="1"/>
</dbReference>
<dbReference type="Gene3D" id="3.30.200.20">
    <property type="entry name" value="Phosphorylase Kinase, domain 1"/>
    <property type="match status" value="1"/>
</dbReference>
<dbReference type="HAMAP" id="MF_00137">
    <property type="entry name" value="SAICAR_synth"/>
    <property type="match status" value="1"/>
</dbReference>
<dbReference type="InterPro" id="IPR028923">
    <property type="entry name" value="SAICAR_synt/ADE2_N"/>
</dbReference>
<dbReference type="InterPro" id="IPR033934">
    <property type="entry name" value="SAICAR_synt_PurC"/>
</dbReference>
<dbReference type="InterPro" id="IPR001636">
    <property type="entry name" value="SAICAR_synth"/>
</dbReference>
<dbReference type="InterPro" id="IPR050089">
    <property type="entry name" value="SAICAR_synthetase"/>
</dbReference>
<dbReference type="InterPro" id="IPR018236">
    <property type="entry name" value="SAICAR_synthetase_CS"/>
</dbReference>
<dbReference type="NCBIfam" id="TIGR00081">
    <property type="entry name" value="purC"/>
    <property type="match status" value="1"/>
</dbReference>
<dbReference type="PANTHER" id="PTHR43599">
    <property type="entry name" value="MULTIFUNCTIONAL PROTEIN ADE2"/>
    <property type="match status" value="1"/>
</dbReference>
<dbReference type="PANTHER" id="PTHR43599:SF3">
    <property type="entry name" value="SI:DKEY-6E2.2"/>
    <property type="match status" value="1"/>
</dbReference>
<dbReference type="Pfam" id="PF01259">
    <property type="entry name" value="SAICAR_synt"/>
    <property type="match status" value="1"/>
</dbReference>
<dbReference type="SUPFAM" id="SSF56104">
    <property type="entry name" value="SAICAR synthase-like"/>
    <property type="match status" value="1"/>
</dbReference>
<dbReference type="PROSITE" id="PS01057">
    <property type="entry name" value="SAICAR_SYNTHETASE_1"/>
    <property type="match status" value="1"/>
</dbReference>
<dbReference type="PROSITE" id="PS01058">
    <property type="entry name" value="SAICAR_SYNTHETASE_2"/>
    <property type="match status" value="1"/>
</dbReference>
<accession>Q668F9</accession>
<reference key="1">
    <citation type="journal article" date="2004" name="Proc. Natl. Acad. Sci. U.S.A.">
        <title>Insights into the evolution of Yersinia pestis through whole-genome comparison with Yersinia pseudotuberculosis.</title>
        <authorList>
            <person name="Chain P.S.G."/>
            <person name="Carniel E."/>
            <person name="Larimer F.W."/>
            <person name="Lamerdin J."/>
            <person name="Stoutland P.O."/>
            <person name="Regala W.M."/>
            <person name="Georgescu A.M."/>
            <person name="Vergez L.M."/>
            <person name="Land M.L."/>
            <person name="Motin V.L."/>
            <person name="Brubaker R.R."/>
            <person name="Fowler J."/>
            <person name="Hinnebusch J."/>
            <person name="Marceau M."/>
            <person name="Medigue C."/>
            <person name="Simonet M."/>
            <person name="Chenal-Francisque V."/>
            <person name="Souza B."/>
            <person name="Dacheux D."/>
            <person name="Elliott J.M."/>
            <person name="Derbise A."/>
            <person name="Hauser L.J."/>
            <person name="Garcia E."/>
        </authorList>
    </citation>
    <scope>NUCLEOTIDE SEQUENCE [LARGE SCALE GENOMIC DNA]</scope>
    <source>
        <strain>IP32953</strain>
    </source>
</reference>
<sequence length="237" mass="27030">MQKLAELYRGKAKTVYTTENPDLLVLEFRNDTSALDGQRIEQFDRKGMVNNKFNHFIMTKLEEAGIPTQMERLLSDTEVLVKKLEMIPVECVIRNRAAGSLVKRLGIEEGLSLNPPLFDLFLKNDAMHDPMVNESYCKTFGWATEAQLARMKELSYLANDVLSKLFDDAGLILVDFKLEFGLFNGEVVLGDEFSPDGSRLWDKKTLNKMDKDRYRQSLGGLIEAYEEVAHRIGVKLD</sequence>
<feature type="chain" id="PRO_1000018818" description="Phosphoribosylaminoimidazole-succinocarboxamide synthase">
    <location>
        <begin position="1"/>
        <end position="237"/>
    </location>
</feature>
<name>PUR7_YERPS</name>
<protein>
    <recommendedName>
        <fullName evidence="1">Phosphoribosylaminoimidazole-succinocarboxamide synthase</fullName>
        <ecNumber evidence="1">6.3.2.6</ecNumber>
    </recommendedName>
    <alternativeName>
        <fullName evidence="1">SAICAR synthetase</fullName>
    </alternativeName>
</protein>